<evidence type="ECO:0000250" key="1"/>
<evidence type="ECO:0000255" key="2"/>
<evidence type="ECO:0000256" key="3">
    <source>
        <dbReference type="SAM" id="MobiDB-lite"/>
    </source>
</evidence>
<evidence type="ECO:0000305" key="4"/>
<sequence length="632" mass="73829">MTINYNLAVSTSKPWTLFKLLLKWRGSIWKAVILELAVWLVLYGILSVIYRTALNPGQQRTFERIVQYCDSRLSYIPLNFMLGFFVTAVVNRWTYLYQIIGFIDNIGLMAAEYVRGRTEQARMYRRNIVRYCELAQVLVFRDISMRTRRRFPTLDTVVAAGFMMPHEKDRFDEIQYKYSKYWVPFQWAFSLTYEARKKGLIESDYYQVVVQDEIKKFRTGLAWICNYDWVPIPIMYPQLVCLAVHTYFLVCLLARQYVVSEHADNKTEIDLYFPIMSTLQFIFYMGWMKVAEAMLNPFGEDDDDFECNALIDRNITMVLMMVDQGYDRAPDLKRDDFWDEEVEPLYSEETAKIPNNPLKGSVSDVKLPEYVHEIKMVPHCDDASPLVPGDEMRRRRVSVVPVKPSDQQHHHHGHRTRTSLGNIEMFRSFKNKIERSFSKPHLHDDLGRKTFSHGMLENMEFEGSNTNIADGSHANNNSFTNSAFVNSGEDLSNKRIDTSSSQPQLATGKRGSEHPFQHHVLDDVLEDDESDENQLTIRKKSSVLQPAITLVERFNEATGQLETEVKRDEKKKKEEELREEGDNGKEEKDNKEDKKEEQDRPSRPTRPFFIGVVRSESEDHSHPHLRPPTKFE</sequence>
<accession>P34672</accession>
<dbReference type="EMBL" id="FO080277">
    <property type="protein sequence ID" value="CCD62533.1"/>
    <property type="molecule type" value="Genomic_DNA"/>
</dbReference>
<dbReference type="PIR" id="S44917">
    <property type="entry name" value="S44917"/>
</dbReference>
<dbReference type="RefSeq" id="NP_498717.1">
    <property type="nucleotide sequence ID" value="NM_066316.8"/>
</dbReference>
<dbReference type="SMR" id="P34672"/>
<dbReference type="BioGRID" id="41317">
    <property type="interactions" value="1"/>
</dbReference>
<dbReference type="FunCoup" id="P34672">
    <property type="interactions" value="488"/>
</dbReference>
<dbReference type="IntAct" id="P34672">
    <property type="interactions" value="1"/>
</dbReference>
<dbReference type="MINT" id="P34672"/>
<dbReference type="STRING" id="6239.ZK688.2.1"/>
<dbReference type="iPTMnet" id="P34672"/>
<dbReference type="PaxDb" id="6239-ZK688.2"/>
<dbReference type="PeptideAtlas" id="P34672"/>
<dbReference type="EnsemblMetazoa" id="ZK688.2.1">
    <property type="protein sequence ID" value="ZK688.2.1"/>
    <property type="gene ID" value="WBGene00022797"/>
</dbReference>
<dbReference type="GeneID" id="176110"/>
<dbReference type="KEGG" id="cel:CELE_ZK688.2"/>
<dbReference type="UCSC" id="ZK688.2">
    <property type="organism name" value="c. elegans"/>
</dbReference>
<dbReference type="AGR" id="WB:WBGene00022797"/>
<dbReference type="CTD" id="176110"/>
<dbReference type="WormBase" id="ZK688.2">
    <property type="protein sequence ID" value="CE00460"/>
    <property type="gene ID" value="WBGene00022797"/>
    <property type="gene designation" value="best-24"/>
</dbReference>
<dbReference type="eggNOG" id="KOG3547">
    <property type="taxonomic scope" value="Eukaryota"/>
</dbReference>
<dbReference type="GeneTree" id="ENSGT00940000168986"/>
<dbReference type="HOGENOM" id="CLU_439573_0_0_1"/>
<dbReference type="InParanoid" id="P34672"/>
<dbReference type="OMA" id="FERIVQY"/>
<dbReference type="OrthoDB" id="201595at2759"/>
<dbReference type="PhylomeDB" id="P34672"/>
<dbReference type="PRO" id="PR:P34672"/>
<dbReference type="Proteomes" id="UP000001940">
    <property type="component" value="Chromosome III"/>
</dbReference>
<dbReference type="Bgee" id="WBGene00022797">
    <property type="expression patterns" value="Expressed in larva and 2 other cell types or tissues"/>
</dbReference>
<dbReference type="GO" id="GO:0034707">
    <property type="term" value="C:chloride channel complex"/>
    <property type="evidence" value="ECO:0007669"/>
    <property type="project" value="UniProtKB-KW"/>
</dbReference>
<dbReference type="GO" id="GO:0005886">
    <property type="term" value="C:plasma membrane"/>
    <property type="evidence" value="ECO:0007669"/>
    <property type="project" value="UniProtKB-SubCell"/>
</dbReference>
<dbReference type="GO" id="GO:0005254">
    <property type="term" value="F:chloride channel activity"/>
    <property type="evidence" value="ECO:0000318"/>
    <property type="project" value="GO_Central"/>
</dbReference>
<dbReference type="InterPro" id="IPR000615">
    <property type="entry name" value="Bestrophin"/>
</dbReference>
<dbReference type="InterPro" id="IPR021134">
    <property type="entry name" value="Bestrophin-like"/>
</dbReference>
<dbReference type="PANTHER" id="PTHR10736">
    <property type="entry name" value="BESTROPHIN"/>
    <property type="match status" value="1"/>
</dbReference>
<dbReference type="PANTHER" id="PTHR10736:SF61">
    <property type="entry name" value="BESTROPHIN HOMOLOG 24"/>
    <property type="match status" value="1"/>
</dbReference>
<dbReference type="Pfam" id="PF01062">
    <property type="entry name" value="Bestrophin"/>
    <property type="match status" value="1"/>
</dbReference>
<protein>
    <recommendedName>
        <fullName>Bestrophin homolog 24</fullName>
    </recommendedName>
</protein>
<organism>
    <name type="scientific">Caenorhabditis elegans</name>
    <dbReference type="NCBI Taxonomy" id="6239"/>
    <lineage>
        <taxon>Eukaryota</taxon>
        <taxon>Metazoa</taxon>
        <taxon>Ecdysozoa</taxon>
        <taxon>Nematoda</taxon>
        <taxon>Chromadorea</taxon>
        <taxon>Rhabditida</taxon>
        <taxon>Rhabditina</taxon>
        <taxon>Rhabditomorpha</taxon>
        <taxon>Rhabditoidea</taxon>
        <taxon>Rhabditidae</taxon>
        <taxon>Peloderinae</taxon>
        <taxon>Caenorhabditis</taxon>
    </lineage>
</organism>
<name>BST24_CAEEL</name>
<gene>
    <name type="primary">best-24</name>
    <name type="ORF">ZK688.2</name>
</gene>
<reference key="1">
    <citation type="journal article" date="1994" name="Nature">
        <title>2.2 Mb of contiguous nucleotide sequence from chromosome III of C. elegans.</title>
        <authorList>
            <person name="Wilson R."/>
            <person name="Ainscough R."/>
            <person name="Anderson K."/>
            <person name="Baynes C."/>
            <person name="Berks M."/>
            <person name="Bonfield J."/>
            <person name="Burton J."/>
            <person name="Connell M."/>
            <person name="Copsey T."/>
            <person name="Cooper J."/>
            <person name="Coulson A."/>
            <person name="Craxton M."/>
            <person name="Dear S."/>
            <person name="Du Z."/>
            <person name="Durbin R."/>
            <person name="Favello A."/>
            <person name="Fraser A."/>
            <person name="Fulton L."/>
            <person name="Gardner A."/>
            <person name="Green P."/>
            <person name="Hawkins T."/>
            <person name="Hillier L."/>
            <person name="Jier M."/>
            <person name="Johnston L."/>
            <person name="Jones M."/>
            <person name="Kershaw J."/>
            <person name="Kirsten J."/>
            <person name="Laisster N."/>
            <person name="Latreille P."/>
            <person name="Lightning J."/>
            <person name="Lloyd C."/>
            <person name="Mortimore B."/>
            <person name="O'Callaghan M."/>
            <person name="Parsons J."/>
            <person name="Percy C."/>
            <person name="Rifken L."/>
            <person name="Roopra A."/>
            <person name="Saunders D."/>
            <person name="Shownkeen R."/>
            <person name="Sims M."/>
            <person name="Smaldon N."/>
            <person name="Smith A."/>
            <person name="Smith M."/>
            <person name="Sonnhammer E."/>
            <person name="Staden R."/>
            <person name="Sulston J."/>
            <person name="Thierry-Mieg J."/>
            <person name="Thomas K."/>
            <person name="Vaudin M."/>
            <person name="Vaughan K."/>
            <person name="Waterston R."/>
            <person name="Watson A."/>
            <person name="Weinstock L."/>
            <person name="Wilkinson-Sproat J."/>
            <person name="Wohldman P."/>
        </authorList>
    </citation>
    <scope>NUCLEOTIDE SEQUENCE [LARGE SCALE GENOMIC DNA]</scope>
    <source>
        <strain>Bristol N2</strain>
    </source>
</reference>
<reference key="2">
    <citation type="journal article" date="1998" name="Science">
        <title>Genome sequence of the nematode C. elegans: a platform for investigating biology.</title>
        <authorList>
            <consortium name="The C. elegans sequencing consortium"/>
        </authorList>
    </citation>
    <scope>NUCLEOTIDE SEQUENCE [LARGE SCALE GENOMIC DNA]</scope>
    <source>
        <strain>Bristol N2</strain>
    </source>
</reference>
<keyword id="KW-1003">Cell membrane</keyword>
<keyword id="KW-0868">Chloride</keyword>
<keyword id="KW-0869">Chloride channel</keyword>
<keyword id="KW-0407">Ion channel</keyword>
<keyword id="KW-0406">Ion transport</keyword>
<keyword id="KW-0472">Membrane</keyword>
<keyword id="KW-1185">Reference proteome</keyword>
<keyword id="KW-0812">Transmembrane</keyword>
<keyword id="KW-1133">Transmembrane helix</keyword>
<keyword id="KW-0813">Transport</keyword>
<feature type="chain" id="PRO_0000143135" description="Bestrophin homolog 24">
    <location>
        <begin position="1"/>
        <end position="632"/>
    </location>
</feature>
<feature type="transmembrane region" description="Helical" evidence="2">
    <location>
        <begin position="28"/>
        <end position="48"/>
    </location>
</feature>
<feature type="transmembrane region" description="Helical" evidence="2">
    <location>
        <begin position="83"/>
        <end position="103"/>
    </location>
</feature>
<feature type="transmembrane region" description="Helical" evidence="2">
    <location>
        <begin position="234"/>
        <end position="254"/>
    </location>
</feature>
<feature type="transmembrane region" description="Helical" evidence="2">
    <location>
        <begin position="271"/>
        <end position="291"/>
    </location>
</feature>
<feature type="region of interest" description="Disordered" evidence="3">
    <location>
        <begin position="491"/>
        <end position="516"/>
    </location>
</feature>
<feature type="region of interest" description="Disordered" evidence="3">
    <location>
        <begin position="562"/>
        <end position="632"/>
    </location>
</feature>
<feature type="compositionally biased region" description="Basic and acidic residues" evidence="3">
    <location>
        <begin position="563"/>
        <end position="602"/>
    </location>
</feature>
<feature type="compositionally biased region" description="Basic residues" evidence="3">
    <location>
        <begin position="623"/>
        <end position="632"/>
    </location>
</feature>
<proteinExistence type="inferred from homology"/>
<comment type="function">
    <text evidence="1">Forms chloride channels.</text>
</comment>
<comment type="subunit">
    <text evidence="1">Forms oligomers.</text>
</comment>
<comment type="subcellular location">
    <subcellularLocation>
        <location evidence="1">Cell membrane</location>
        <topology evidence="1">Multi-pass membrane protein</topology>
    </subcellularLocation>
</comment>
<comment type="similarity">
    <text evidence="4">Belongs to the anion channel-forming bestrophin (TC 1.A.46) family. Calcium-sensitive chloride channel subfamily.</text>
</comment>